<comment type="function">
    <text evidence="1">Binds directly to 16S ribosomal RNA.</text>
</comment>
<comment type="similarity">
    <text evidence="1">Belongs to the bacterial ribosomal protein bS20 family.</text>
</comment>
<gene>
    <name evidence="1" type="primary">rpsT</name>
    <name type="ordered locus">TERTU_0965</name>
</gene>
<dbReference type="EMBL" id="CP001614">
    <property type="protein sequence ID" value="ACR10926.1"/>
    <property type="molecule type" value="Genomic_DNA"/>
</dbReference>
<dbReference type="RefSeq" id="WP_015817038.1">
    <property type="nucleotide sequence ID" value="NC_012997.1"/>
</dbReference>
<dbReference type="SMR" id="C5BQB7"/>
<dbReference type="STRING" id="377629.TERTU_0965"/>
<dbReference type="KEGG" id="ttu:TERTU_0965"/>
<dbReference type="eggNOG" id="COG0268">
    <property type="taxonomic scope" value="Bacteria"/>
</dbReference>
<dbReference type="HOGENOM" id="CLU_160655_4_0_6"/>
<dbReference type="OrthoDB" id="9807974at2"/>
<dbReference type="Proteomes" id="UP000009080">
    <property type="component" value="Chromosome"/>
</dbReference>
<dbReference type="GO" id="GO:0005829">
    <property type="term" value="C:cytosol"/>
    <property type="evidence" value="ECO:0007669"/>
    <property type="project" value="TreeGrafter"/>
</dbReference>
<dbReference type="GO" id="GO:0015935">
    <property type="term" value="C:small ribosomal subunit"/>
    <property type="evidence" value="ECO:0007669"/>
    <property type="project" value="TreeGrafter"/>
</dbReference>
<dbReference type="GO" id="GO:0070181">
    <property type="term" value="F:small ribosomal subunit rRNA binding"/>
    <property type="evidence" value="ECO:0007669"/>
    <property type="project" value="TreeGrafter"/>
</dbReference>
<dbReference type="GO" id="GO:0003735">
    <property type="term" value="F:structural constituent of ribosome"/>
    <property type="evidence" value="ECO:0007669"/>
    <property type="project" value="InterPro"/>
</dbReference>
<dbReference type="GO" id="GO:0006412">
    <property type="term" value="P:translation"/>
    <property type="evidence" value="ECO:0007669"/>
    <property type="project" value="UniProtKB-UniRule"/>
</dbReference>
<dbReference type="FunFam" id="1.20.58.110:FF:000001">
    <property type="entry name" value="30S ribosomal protein S20"/>
    <property type="match status" value="1"/>
</dbReference>
<dbReference type="Gene3D" id="1.20.58.110">
    <property type="entry name" value="Ribosomal protein S20"/>
    <property type="match status" value="1"/>
</dbReference>
<dbReference type="HAMAP" id="MF_00500">
    <property type="entry name" value="Ribosomal_bS20"/>
    <property type="match status" value="1"/>
</dbReference>
<dbReference type="InterPro" id="IPR002583">
    <property type="entry name" value="Ribosomal_bS20"/>
</dbReference>
<dbReference type="InterPro" id="IPR036510">
    <property type="entry name" value="Ribosomal_bS20_sf"/>
</dbReference>
<dbReference type="NCBIfam" id="TIGR00029">
    <property type="entry name" value="S20"/>
    <property type="match status" value="1"/>
</dbReference>
<dbReference type="PANTHER" id="PTHR33398">
    <property type="entry name" value="30S RIBOSOMAL PROTEIN S20"/>
    <property type="match status" value="1"/>
</dbReference>
<dbReference type="PANTHER" id="PTHR33398:SF1">
    <property type="entry name" value="SMALL RIBOSOMAL SUBUNIT PROTEIN BS20C"/>
    <property type="match status" value="1"/>
</dbReference>
<dbReference type="Pfam" id="PF01649">
    <property type="entry name" value="Ribosomal_S20p"/>
    <property type="match status" value="1"/>
</dbReference>
<dbReference type="SUPFAM" id="SSF46992">
    <property type="entry name" value="Ribosomal protein S20"/>
    <property type="match status" value="1"/>
</dbReference>
<organism>
    <name type="scientific">Teredinibacter turnerae (strain ATCC 39867 / T7901)</name>
    <dbReference type="NCBI Taxonomy" id="377629"/>
    <lineage>
        <taxon>Bacteria</taxon>
        <taxon>Pseudomonadati</taxon>
        <taxon>Pseudomonadota</taxon>
        <taxon>Gammaproteobacteria</taxon>
        <taxon>Cellvibrionales</taxon>
        <taxon>Cellvibrionaceae</taxon>
        <taxon>Teredinibacter</taxon>
    </lineage>
</organism>
<feature type="chain" id="PRO_1000206511" description="Small ribosomal subunit protein bS20">
    <location>
        <begin position="1"/>
        <end position="88"/>
    </location>
</feature>
<feature type="region of interest" description="Disordered" evidence="2">
    <location>
        <begin position="1"/>
        <end position="23"/>
    </location>
</feature>
<evidence type="ECO:0000255" key="1">
    <source>
        <dbReference type="HAMAP-Rule" id="MF_00500"/>
    </source>
</evidence>
<evidence type="ECO:0000256" key="2">
    <source>
        <dbReference type="SAM" id="MobiDB-lite"/>
    </source>
</evidence>
<evidence type="ECO:0000305" key="3"/>
<keyword id="KW-1185">Reference proteome</keyword>
<keyword id="KW-0687">Ribonucleoprotein</keyword>
<keyword id="KW-0689">Ribosomal protein</keyword>
<keyword id="KW-0694">RNA-binding</keyword>
<keyword id="KW-0699">rRNA-binding</keyword>
<proteinExistence type="inferred from homology"/>
<name>RS20_TERTT</name>
<accession>C5BQB7</accession>
<sequence>MANSPQAKKRARQNDKARAHNASLRSMVRTYLKKVVAAIEAGDAEAAKKAYVAAVPVIDRMADKGIIHKNKAARHKSRLNAQIKGLAA</sequence>
<protein>
    <recommendedName>
        <fullName evidence="1">Small ribosomal subunit protein bS20</fullName>
    </recommendedName>
    <alternativeName>
        <fullName evidence="3">30S ribosomal protein S20</fullName>
    </alternativeName>
</protein>
<reference key="1">
    <citation type="journal article" date="2009" name="PLoS ONE">
        <title>The complete genome of Teredinibacter turnerae T7901: an intracellular endosymbiont of marine wood-boring bivalves (shipworms).</title>
        <authorList>
            <person name="Yang J.C."/>
            <person name="Madupu R."/>
            <person name="Durkin A.S."/>
            <person name="Ekborg N.A."/>
            <person name="Pedamallu C.S."/>
            <person name="Hostetler J.B."/>
            <person name="Radune D."/>
            <person name="Toms B.S."/>
            <person name="Henrissat B."/>
            <person name="Coutinho P.M."/>
            <person name="Schwarz S."/>
            <person name="Field L."/>
            <person name="Trindade-Silva A.E."/>
            <person name="Soares C.A.G."/>
            <person name="Elshahawi S."/>
            <person name="Hanora A."/>
            <person name="Schmidt E.W."/>
            <person name="Haygood M.G."/>
            <person name="Posfai J."/>
            <person name="Benner J."/>
            <person name="Madinger C."/>
            <person name="Nove J."/>
            <person name="Anton B."/>
            <person name="Chaudhary K."/>
            <person name="Foster J."/>
            <person name="Holman A."/>
            <person name="Kumar S."/>
            <person name="Lessard P.A."/>
            <person name="Luyten Y.A."/>
            <person name="Slatko B."/>
            <person name="Wood N."/>
            <person name="Wu B."/>
            <person name="Teplitski M."/>
            <person name="Mougous J.D."/>
            <person name="Ward N."/>
            <person name="Eisen J.A."/>
            <person name="Badger J.H."/>
            <person name="Distel D.L."/>
        </authorList>
    </citation>
    <scope>NUCLEOTIDE SEQUENCE [LARGE SCALE GENOMIC DNA]</scope>
    <source>
        <strain>ATCC 39867 / T7901</strain>
    </source>
</reference>